<evidence type="ECO:0000255" key="1">
    <source>
        <dbReference type="HAMAP-Rule" id="MF_00259"/>
    </source>
</evidence>
<sequence>MAKQTPLYDQHVACGARMVDFHGWMMPLHYGSQIDEHHFVRQDAGMFDVSHMTIVDLHGNRTREFLRYLLANDVAKLTQPGKALYTGMLNESGGVIDDLIVYFLSEDYFRLVVNSATRDKDLAWISQHAEPYQVEVTVRDDLALIAVQGPQAQQKVATLLTTEQQQAIAGMKPFFGIQTGDLFIATTGYTGEAGYEIALPKQQVVAFWQQLLAAGVKPAGLGARDTLRLEAGMNLYGQEMDEKTSPLAANMGWTVAWQPEDRQFIGRAALERQRMKGTEQLVGLIMTEKGVLRNELPVYFFDAAGNQHVGVITSGSFSPTLGFSIALARVPAGIGEHAVVQIRNREMPVRVTKPGFVRAGKAIVL</sequence>
<dbReference type="EC" id="2.1.2.10" evidence="1"/>
<dbReference type="EMBL" id="CP000305">
    <property type="protein sequence ID" value="ABG19433.1"/>
    <property type="molecule type" value="Genomic_DNA"/>
</dbReference>
<dbReference type="EMBL" id="ACNQ01000017">
    <property type="protein sequence ID" value="EEO75596.1"/>
    <property type="molecule type" value="Genomic_DNA"/>
</dbReference>
<dbReference type="RefSeq" id="WP_002209949.1">
    <property type="nucleotide sequence ID" value="NZ_ACNQ01000017.1"/>
</dbReference>
<dbReference type="SMR" id="Q1CEZ7"/>
<dbReference type="GeneID" id="57973733"/>
<dbReference type="KEGG" id="ypn:YPN_3106"/>
<dbReference type="HOGENOM" id="CLU_007884_10_2_6"/>
<dbReference type="Proteomes" id="UP000008936">
    <property type="component" value="Chromosome"/>
</dbReference>
<dbReference type="GO" id="GO:0005829">
    <property type="term" value="C:cytosol"/>
    <property type="evidence" value="ECO:0007669"/>
    <property type="project" value="TreeGrafter"/>
</dbReference>
<dbReference type="GO" id="GO:0005960">
    <property type="term" value="C:glycine cleavage complex"/>
    <property type="evidence" value="ECO:0007669"/>
    <property type="project" value="InterPro"/>
</dbReference>
<dbReference type="GO" id="GO:0004047">
    <property type="term" value="F:aminomethyltransferase activity"/>
    <property type="evidence" value="ECO:0007669"/>
    <property type="project" value="UniProtKB-UniRule"/>
</dbReference>
<dbReference type="GO" id="GO:0008483">
    <property type="term" value="F:transaminase activity"/>
    <property type="evidence" value="ECO:0007669"/>
    <property type="project" value="UniProtKB-KW"/>
</dbReference>
<dbReference type="GO" id="GO:0019464">
    <property type="term" value="P:glycine decarboxylation via glycine cleavage system"/>
    <property type="evidence" value="ECO:0007669"/>
    <property type="project" value="UniProtKB-UniRule"/>
</dbReference>
<dbReference type="FunFam" id="2.40.30.110:FF:000001">
    <property type="entry name" value="Aminomethyltransferase"/>
    <property type="match status" value="1"/>
</dbReference>
<dbReference type="FunFam" id="3.30.70.1400:FF:000001">
    <property type="entry name" value="Aminomethyltransferase"/>
    <property type="match status" value="1"/>
</dbReference>
<dbReference type="FunFam" id="4.10.1250.10:FF:000001">
    <property type="entry name" value="Aminomethyltransferase"/>
    <property type="match status" value="1"/>
</dbReference>
<dbReference type="Gene3D" id="2.40.30.110">
    <property type="entry name" value="Aminomethyltransferase beta-barrel domains"/>
    <property type="match status" value="1"/>
</dbReference>
<dbReference type="Gene3D" id="3.30.70.1400">
    <property type="entry name" value="Aminomethyltransferase beta-barrel domains"/>
    <property type="match status" value="1"/>
</dbReference>
<dbReference type="Gene3D" id="4.10.1250.10">
    <property type="entry name" value="Aminomethyltransferase fragment"/>
    <property type="match status" value="1"/>
</dbReference>
<dbReference type="Gene3D" id="3.30.1360.120">
    <property type="entry name" value="Probable tRNA modification gtpase trme, domain 1"/>
    <property type="match status" value="1"/>
</dbReference>
<dbReference type="HAMAP" id="MF_00259">
    <property type="entry name" value="GcvT"/>
    <property type="match status" value="1"/>
</dbReference>
<dbReference type="InterPro" id="IPR006223">
    <property type="entry name" value="GCS_T"/>
</dbReference>
<dbReference type="InterPro" id="IPR022903">
    <property type="entry name" value="GCS_T_bac"/>
</dbReference>
<dbReference type="InterPro" id="IPR013977">
    <property type="entry name" value="GCST_C"/>
</dbReference>
<dbReference type="InterPro" id="IPR006222">
    <property type="entry name" value="GCV_T_N"/>
</dbReference>
<dbReference type="InterPro" id="IPR028896">
    <property type="entry name" value="GcvT/YgfZ/DmdA"/>
</dbReference>
<dbReference type="InterPro" id="IPR029043">
    <property type="entry name" value="GcvT/YgfZ_C"/>
</dbReference>
<dbReference type="InterPro" id="IPR027266">
    <property type="entry name" value="TrmE/GcvT_dom1"/>
</dbReference>
<dbReference type="NCBIfam" id="TIGR00528">
    <property type="entry name" value="gcvT"/>
    <property type="match status" value="1"/>
</dbReference>
<dbReference type="NCBIfam" id="NF001567">
    <property type="entry name" value="PRK00389.1"/>
    <property type="match status" value="1"/>
</dbReference>
<dbReference type="PANTHER" id="PTHR43757">
    <property type="entry name" value="AMINOMETHYLTRANSFERASE"/>
    <property type="match status" value="1"/>
</dbReference>
<dbReference type="PANTHER" id="PTHR43757:SF2">
    <property type="entry name" value="AMINOMETHYLTRANSFERASE, MITOCHONDRIAL"/>
    <property type="match status" value="1"/>
</dbReference>
<dbReference type="Pfam" id="PF01571">
    <property type="entry name" value="GCV_T"/>
    <property type="match status" value="1"/>
</dbReference>
<dbReference type="Pfam" id="PF08669">
    <property type="entry name" value="GCV_T_C"/>
    <property type="match status" value="1"/>
</dbReference>
<dbReference type="PIRSF" id="PIRSF006487">
    <property type="entry name" value="GcvT"/>
    <property type="match status" value="1"/>
</dbReference>
<dbReference type="SUPFAM" id="SSF101790">
    <property type="entry name" value="Aminomethyltransferase beta-barrel domain"/>
    <property type="match status" value="1"/>
</dbReference>
<dbReference type="SUPFAM" id="SSF103025">
    <property type="entry name" value="Folate-binding domain"/>
    <property type="match status" value="1"/>
</dbReference>
<gene>
    <name evidence="1" type="primary">gcvT</name>
    <name type="ordered locus">YPN_3106</name>
    <name type="ORF">YP516_3525</name>
</gene>
<accession>Q1CEZ7</accession>
<accession>C4GXE6</accession>
<keyword id="KW-0032">Aminotransferase</keyword>
<keyword id="KW-0808">Transferase</keyword>
<reference key="1">
    <citation type="journal article" date="2006" name="J. Bacteriol.">
        <title>Complete genome sequence of Yersinia pestis strains Antiqua and Nepal516: evidence of gene reduction in an emerging pathogen.</title>
        <authorList>
            <person name="Chain P.S.G."/>
            <person name="Hu P."/>
            <person name="Malfatti S.A."/>
            <person name="Radnedge L."/>
            <person name="Larimer F."/>
            <person name="Vergez L.M."/>
            <person name="Worsham P."/>
            <person name="Chu M.C."/>
            <person name="Andersen G.L."/>
        </authorList>
    </citation>
    <scope>NUCLEOTIDE SEQUENCE [LARGE SCALE GENOMIC DNA]</scope>
    <source>
        <strain>Nepal516</strain>
    </source>
</reference>
<reference key="2">
    <citation type="submission" date="2009-04" db="EMBL/GenBank/DDBJ databases">
        <title>Yersinia pestis Nepal516A whole genome shotgun sequencing project.</title>
        <authorList>
            <person name="Plunkett G. III"/>
            <person name="Anderson B.D."/>
            <person name="Baumler D.J."/>
            <person name="Burland V."/>
            <person name="Cabot E.L."/>
            <person name="Glasner J.D."/>
            <person name="Mau B."/>
            <person name="Neeno-Eckwall E."/>
            <person name="Perna N.T."/>
            <person name="Munk A.C."/>
            <person name="Tapia R."/>
            <person name="Green L.D."/>
            <person name="Rogers Y.C."/>
            <person name="Detter J.C."/>
            <person name="Bruce D.C."/>
            <person name="Brettin T.S."/>
        </authorList>
    </citation>
    <scope>NUCLEOTIDE SEQUENCE [LARGE SCALE GENOMIC DNA]</scope>
    <source>
        <strain>Nepal516</strain>
    </source>
</reference>
<organism>
    <name type="scientific">Yersinia pestis bv. Antiqua (strain Nepal516)</name>
    <dbReference type="NCBI Taxonomy" id="377628"/>
    <lineage>
        <taxon>Bacteria</taxon>
        <taxon>Pseudomonadati</taxon>
        <taxon>Pseudomonadota</taxon>
        <taxon>Gammaproteobacteria</taxon>
        <taxon>Enterobacterales</taxon>
        <taxon>Yersiniaceae</taxon>
        <taxon>Yersinia</taxon>
    </lineage>
</organism>
<name>GCST_YERPN</name>
<feature type="chain" id="PRO_1000047732" description="Aminomethyltransferase">
    <location>
        <begin position="1"/>
        <end position="365"/>
    </location>
</feature>
<comment type="function">
    <text evidence="1">The glycine cleavage system catalyzes the degradation of glycine.</text>
</comment>
<comment type="catalytic activity">
    <reaction evidence="1">
        <text>N(6)-[(R)-S(8)-aminomethyldihydrolipoyl]-L-lysyl-[protein] + (6S)-5,6,7,8-tetrahydrofolate = N(6)-[(R)-dihydrolipoyl]-L-lysyl-[protein] + (6R)-5,10-methylene-5,6,7,8-tetrahydrofolate + NH4(+)</text>
        <dbReference type="Rhea" id="RHEA:16945"/>
        <dbReference type="Rhea" id="RHEA-COMP:10475"/>
        <dbReference type="Rhea" id="RHEA-COMP:10492"/>
        <dbReference type="ChEBI" id="CHEBI:15636"/>
        <dbReference type="ChEBI" id="CHEBI:28938"/>
        <dbReference type="ChEBI" id="CHEBI:57453"/>
        <dbReference type="ChEBI" id="CHEBI:83100"/>
        <dbReference type="ChEBI" id="CHEBI:83143"/>
        <dbReference type="EC" id="2.1.2.10"/>
    </reaction>
</comment>
<comment type="subunit">
    <text evidence="1">The glycine cleavage system is composed of four proteins: P, T, L and H.</text>
</comment>
<comment type="similarity">
    <text evidence="1">Belongs to the GcvT family.</text>
</comment>
<protein>
    <recommendedName>
        <fullName evidence="1">Aminomethyltransferase</fullName>
        <ecNumber evidence="1">2.1.2.10</ecNumber>
    </recommendedName>
    <alternativeName>
        <fullName evidence="1">Glycine cleavage system T protein</fullName>
    </alternativeName>
</protein>
<proteinExistence type="inferred from homology"/>